<protein>
    <recommendedName>
        <fullName>Thyroid hormone receptor beta</fullName>
    </recommendedName>
    <alternativeName>
        <fullName>Nuclear receptor subfamily 1 group A member 2</fullName>
    </alternativeName>
</protein>
<sequence length="373" mass="42285">MPSSMSGYIPSYLDKDELCVVCGDKATGYHYRCITCEGCKGFFRRTIQKNLHPSYSCKYEGKCVIDKVTRNQCQECRFKKCIAVGMATDLVLDDSKRLAKRKLIEENREKRRKDELQKTLVQKPEPTPEEWELIQVVTEAHVATNAQGSHWKQKRKFLPEDIGQAPIVNAPEGGKVDLEAFSQFTKIITPAITRVVDFAKKLPMFCELPCEDQIILLKGCCMEIMSLRAAVRYDPESETLTLNGEMAVTRGQLKNGGLGVVSDAIFDLGVSLSSFNLDDTEVALLQAVLLMSSDRPGLSSVERIEKCQEGFLLAFEHYINYRKHNVAHFWPKLLMKVTDLRMIGACHASRFLHMKVECPTELFPPLFLEVFED</sequence>
<accession>Q02965</accession>
<evidence type="ECO:0000250" key="1">
    <source>
        <dbReference type="UniProtKB" id="P10828"/>
    </source>
</evidence>
<evidence type="ECO:0000255" key="2"/>
<evidence type="ECO:0000255" key="3">
    <source>
        <dbReference type="PROSITE-ProRule" id="PRU00407"/>
    </source>
</evidence>
<evidence type="ECO:0000255" key="4">
    <source>
        <dbReference type="PROSITE-ProRule" id="PRU01189"/>
    </source>
</evidence>
<evidence type="ECO:0000305" key="5"/>
<dbReference type="EMBL" id="L27344">
    <property type="protein sequence ID" value="AAA53658.1"/>
    <property type="molecule type" value="mRNA"/>
</dbReference>
<dbReference type="EMBL" id="M95194">
    <property type="protein sequence ID" value="AAA49535.1"/>
    <property type="molecule type" value="Genomic_DNA"/>
</dbReference>
<dbReference type="PIR" id="B48421">
    <property type="entry name" value="B48421"/>
</dbReference>
<dbReference type="PIR" id="I51165">
    <property type="entry name" value="I51165"/>
</dbReference>
<dbReference type="SMR" id="Q02965"/>
<dbReference type="OrthoDB" id="6081310at2759"/>
<dbReference type="GO" id="GO:0090575">
    <property type="term" value="C:RNA polymerase II transcription regulator complex"/>
    <property type="evidence" value="ECO:0007669"/>
    <property type="project" value="TreeGrafter"/>
</dbReference>
<dbReference type="GO" id="GO:0004879">
    <property type="term" value="F:nuclear receptor activity"/>
    <property type="evidence" value="ECO:0000250"/>
    <property type="project" value="UniProtKB"/>
</dbReference>
<dbReference type="GO" id="GO:0000978">
    <property type="term" value="F:RNA polymerase II cis-regulatory region sequence-specific DNA binding"/>
    <property type="evidence" value="ECO:0007669"/>
    <property type="project" value="TreeGrafter"/>
</dbReference>
<dbReference type="GO" id="GO:0070324">
    <property type="term" value="F:thyroid hormone binding"/>
    <property type="evidence" value="ECO:0000250"/>
    <property type="project" value="UniProtKB"/>
</dbReference>
<dbReference type="GO" id="GO:0008270">
    <property type="term" value="F:zinc ion binding"/>
    <property type="evidence" value="ECO:0007669"/>
    <property type="project" value="UniProtKB-KW"/>
</dbReference>
<dbReference type="GO" id="GO:0030154">
    <property type="term" value="P:cell differentiation"/>
    <property type="evidence" value="ECO:0007669"/>
    <property type="project" value="TreeGrafter"/>
</dbReference>
<dbReference type="GO" id="GO:0000122">
    <property type="term" value="P:negative regulation of transcription by RNA polymerase II"/>
    <property type="evidence" value="ECO:0007669"/>
    <property type="project" value="TreeGrafter"/>
</dbReference>
<dbReference type="GO" id="GO:0045944">
    <property type="term" value="P:positive regulation of transcription by RNA polymerase II"/>
    <property type="evidence" value="ECO:0007669"/>
    <property type="project" value="TreeGrafter"/>
</dbReference>
<dbReference type="GO" id="GO:0048384">
    <property type="term" value="P:retinoic acid receptor signaling pathway"/>
    <property type="evidence" value="ECO:0007669"/>
    <property type="project" value="TreeGrafter"/>
</dbReference>
<dbReference type="GO" id="GO:0002154">
    <property type="term" value="P:thyroid hormone receptor signaling pathway"/>
    <property type="evidence" value="ECO:0007669"/>
    <property type="project" value="TreeGrafter"/>
</dbReference>
<dbReference type="CDD" id="cd06961">
    <property type="entry name" value="NR_DBD_TR"/>
    <property type="match status" value="1"/>
</dbReference>
<dbReference type="CDD" id="cd06935">
    <property type="entry name" value="NR_LBD_TR"/>
    <property type="match status" value="1"/>
</dbReference>
<dbReference type="FunFam" id="1.10.565.10:FF:000006">
    <property type="entry name" value="Thyroid hormone receptor beta 2"/>
    <property type="match status" value="1"/>
</dbReference>
<dbReference type="FunFam" id="3.30.50.10:FF:000011">
    <property type="entry name" value="Thyroid hormone receptor beta isoform"/>
    <property type="match status" value="1"/>
</dbReference>
<dbReference type="Gene3D" id="3.30.50.10">
    <property type="entry name" value="Erythroid Transcription Factor GATA-1, subunit A"/>
    <property type="match status" value="1"/>
</dbReference>
<dbReference type="Gene3D" id="1.10.565.10">
    <property type="entry name" value="Retinoid X Receptor"/>
    <property type="match status" value="1"/>
</dbReference>
<dbReference type="InterPro" id="IPR035500">
    <property type="entry name" value="NHR-like_dom_sf"/>
</dbReference>
<dbReference type="InterPro" id="IPR000536">
    <property type="entry name" value="Nucl_hrmn_rcpt_lig-bd"/>
</dbReference>
<dbReference type="InterPro" id="IPR050234">
    <property type="entry name" value="Nuclear_hormone_rcpt_NR1"/>
</dbReference>
<dbReference type="InterPro" id="IPR001723">
    <property type="entry name" value="Nuclear_hrmn_rcpt"/>
</dbReference>
<dbReference type="InterPro" id="IPR001728">
    <property type="entry name" value="ThyrH_rcpt"/>
</dbReference>
<dbReference type="InterPro" id="IPR001628">
    <property type="entry name" value="Znf_hrmn_rcpt"/>
</dbReference>
<dbReference type="InterPro" id="IPR013088">
    <property type="entry name" value="Znf_NHR/GATA"/>
</dbReference>
<dbReference type="PANTHER" id="PTHR24082">
    <property type="entry name" value="NUCLEAR HORMONE RECEPTOR"/>
    <property type="match status" value="1"/>
</dbReference>
<dbReference type="PANTHER" id="PTHR24082:SF210">
    <property type="entry name" value="THYROID HORMONE RECEPTOR BETA"/>
    <property type="match status" value="1"/>
</dbReference>
<dbReference type="Pfam" id="PF00104">
    <property type="entry name" value="Hormone_recep"/>
    <property type="match status" value="1"/>
</dbReference>
<dbReference type="Pfam" id="PF00105">
    <property type="entry name" value="zf-C4"/>
    <property type="match status" value="1"/>
</dbReference>
<dbReference type="PRINTS" id="PR00398">
    <property type="entry name" value="STRDHORMONER"/>
</dbReference>
<dbReference type="PRINTS" id="PR00047">
    <property type="entry name" value="STROIDFINGER"/>
</dbReference>
<dbReference type="PRINTS" id="PR00546">
    <property type="entry name" value="THYROIDHORMR"/>
</dbReference>
<dbReference type="SMART" id="SM00430">
    <property type="entry name" value="HOLI"/>
    <property type="match status" value="1"/>
</dbReference>
<dbReference type="SMART" id="SM00399">
    <property type="entry name" value="ZnF_C4"/>
    <property type="match status" value="1"/>
</dbReference>
<dbReference type="SUPFAM" id="SSF57716">
    <property type="entry name" value="Glucocorticoid receptor-like (DNA-binding domain)"/>
    <property type="match status" value="1"/>
</dbReference>
<dbReference type="SUPFAM" id="SSF48508">
    <property type="entry name" value="Nuclear receptor ligand-binding domain"/>
    <property type="match status" value="1"/>
</dbReference>
<dbReference type="PROSITE" id="PS51843">
    <property type="entry name" value="NR_LBD"/>
    <property type="match status" value="1"/>
</dbReference>
<dbReference type="PROSITE" id="PS00031">
    <property type="entry name" value="NUCLEAR_REC_DBD_1"/>
    <property type="match status" value="1"/>
</dbReference>
<dbReference type="PROSITE" id="PS51030">
    <property type="entry name" value="NUCLEAR_REC_DBD_2"/>
    <property type="match status" value="1"/>
</dbReference>
<keyword id="KW-0238">DNA-binding</keyword>
<keyword id="KW-0479">Metal-binding</keyword>
<keyword id="KW-0539">Nucleus</keyword>
<keyword id="KW-0675">Receptor</keyword>
<keyword id="KW-0804">Transcription</keyword>
<keyword id="KW-0805">Transcription regulation</keyword>
<keyword id="KW-0862">Zinc</keyword>
<keyword id="KW-0863">Zinc-finger</keyword>
<reference key="1">
    <citation type="journal article" date="1994" name="Dev. Genet.">
        <title>Cloning of a thyroid hormone-responsive Rana catesbeiana c-erbA-beta gene.</title>
        <authorList>
            <person name="Davey J.C."/>
            <person name="Schneider M.J."/>
            <person name="Galton V.A."/>
        </authorList>
    </citation>
    <scope>NUCLEOTIDE SEQUENCE [MRNA]</scope>
    <source>
        <tissue>Eye</tissue>
        <tissue>Liver</tissue>
    </source>
</reference>
<reference key="2">
    <citation type="journal article" date="1992" name="Dev. Genet.">
        <title>Sequential up-regulation of thyroid hormone beta receptor, ornithine transcarbamylase, and carbamyl phosphate synthetase mRNAs in the liver of Rana catesbeiana tadpoles during spontaneous and thyroid hormone-induced metamorphosis.</title>
        <authorList>
            <person name="Helbing C."/>
            <person name="Gergely G."/>
            <person name="Atkinson B.G."/>
        </authorList>
    </citation>
    <scope>NUCLEOTIDE SEQUENCE [GENOMIC DNA] OF 294-373</scope>
    <source>
        <tissue>Liver</tissue>
    </source>
</reference>
<feature type="chain" id="PRO_0000053457" description="Thyroid hormone receptor beta">
    <location>
        <begin position="1"/>
        <end position="373"/>
    </location>
</feature>
<feature type="domain" description="NR LBD" evidence="4">
    <location>
        <begin position="129"/>
        <end position="373"/>
    </location>
</feature>
<feature type="DNA-binding region" description="Nuclear receptor" evidence="3">
    <location>
        <begin position="19"/>
        <end position="93"/>
    </location>
</feature>
<feature type="zinc finger region" description="NR C4-type" evidence="3">
    <location>
        <begin position="19"/>
        <end position="39"/>
    </location>
</feature>
<feature type="zinc finger region" description="NR C4-type" evidence="3">
    <location>
        <begin position="57"/>
        <end position="81"/>
    </location>
</feature>
<feature type="region of interest" description="Modulating" evidence="2">
    <location>
        <begin position="1"/>
        <end position="18"/>
    </location>
</feature>
<feature type="binding site" evidence="1">
    <location>
        <position position="19"/>
    </location>
    <ligand>
        <name>Zn(2+)</name>
        <dbReference type="ChEBI" id="CHEBI:29105"/>
        <label>1</label>
    </ligand>
</feature>
<feature type="binding site" evidence="1">
    <location>
        <position position="22"/>
    </location>
    <ligand>
        <name>Zn(2+)</name>
        <dbReference type="ChEBI" id="CHEBI:29105"/>
        <label>1</label>
    </ligand>
</feature>
<feature type="binding site" evidence="1">
    <location>
        <position position="36"/>
    </location>
    <ligand>
        <name>Zn(2+)</name>
        <dbReference type="ChEBI" id="CHEBI:29105"/>
        <label>1</label>
    </ligand>
</feature>
<feature type="binding site" evidence="1">
    <location>
        <position position="39"/>
    </location>
    <ligand>
        <name>Zn(2+)</name>
        <dbReference type="ChEBI" id="CHEBI:29105"/>
        <label>1</label>
    </ligand>
</feature>
<feature type="binding site" evidence="1">
    <location>
        <position position="57"/>
    </location>
    <ligand>
        <name>Zn(2+)</name>
        <dbReference type="ChEBI" id="CHEBI:29105"/>
        <label>2</label>
    </ligand>
</feature>
<feature type="binding site" evidence="1">
    <location>
        <position position="63"/>
    </location>
    <ligand>
        <name>Zn(2+)</name>
        <dbReference type="ChEBI" id="CHEBI:29105"/>
        <label>2</label>
    </ligand>
</feature>
<feature type="binding site" evidence="1">
    <location>
        <position position="73"/>
    </location>
    <ligand>
        <name>Zn(2+)</name>
        <dbReference type="ChEBI" id="CHEBI:29105"/>
        <label>2</label>
    </ligand>
</feature>
<feature type="binding site" evidence="1">
    <location>
        <position position="76"/>
    </location>
    <ligand>
        <name>Zn(2+)</name>
        <dbReference type="ChEBI" id="CHEBI:29105"/>
        <label>2</label>
    </ligand>
</feature>
<feature type="binding site" evidence="1">
    <location>
        <position position="194"/>
    </location>
    <ligand>
        <name>3,3',5-triiodo-L-thyronine</name>
        <dbReference type="ChEBI" id="CHEBI:533015"/>
    </ligand>
</feature>
<feature type="binding site" evidence="1">
    <location>
        <position position="194"/>
    </location>
    <ligand>
        <name>L-thyroxine</name>
        <dbReference type="ChEBI" id="CHEBI:58448"/>
    </ligand>
</feature>
<feature type="binding site" evidence="1">
    <location>
        <position position="243"/>
    </location>
    <ligand>
        <name>3,3',5-triiodo-L-thyronine</name>
        <dbReference type="ChEBI" id="CHEBI:533015"/>
    </ligand>
</feature>
<feature type="binding site" evidence="1">
    <location>
        <position position="243"/>
    </location>
    <ligand>
        <name>L-thyroxine</name>
        <dbReference type="ChEBI" id="CHEBI:58448"/>
    </ligand>
</feature>
<feature type="binding site" evidence="1">
    <location>
        <position position="347"/>
    </location>
    <ligand>
        <name>3,3',5-triiodo-L-thyronine</name>
        <dbReference type="ChEBI" id="CHEBI:533015"/>
        <label>1</label>
    </ligand>
</feature>
<feature type="binding site" evidence="1">
    <location>
        <position position="347"/>
    </location>
    <ligand>
        <name>L-thyroxine</name>
        <dbReference type="ChEBI" id="CHEBI:58448"/>
    </ligand>
</feature>
<proteinExistence type="evidence at transcript level"/>
<comment type="function">
    <text>Nuclear hormone receptor that can act as a repressor or activator of transcription. High affinity receptor for thyroid hormones, including triiodothyronine and thyroxine.</text>
</comment>
<comment type="subcellular location">
    <subcellularLocation>
        <location>Nucleus</location>
    </subcellularLocation>
</comment>
<comment type="induction">
    <text>By thyroid hormone.</text>
</comment>
<comment type="domain">
    <text>Composed of three domains: a modulating N-terminal domain, a DNA-binding domain and a C-terminal ligand-binding domain.</text>
</comment>
<comment type="similarity">
    <text evidence="5">Belongs to the nuclear hormone receptor family. NR1 subfamily.</text>
</comment>
<gene>
    <name type="primary">thrb</name>
    <name type="synonym">nr1a2</name>
</gene>
<organism>
    <name type="scientific">Aquarana catesbeiana</name>
    <name type="common">American bullfrog</name>
    <name type="synonym">Rana catesbeiana</name>
    <dbReference type="NCBI Taxonomy" id="8400"/>
    <lineage>
        <taxon>Eukaryota</taxon>
        <taxon>Metazoa</taxon>
        <taxon>Chordata</taxon>
        <taxon>Craniata</taxon>
        <taxon>Vertebrata</taxon>
        <taxon>Euteleostomi</taxon>
        <taxon>Amphibia</taxon>
        <taxon>Batrachia</taxon>
        <taxon>Anura</taxon>
        <taxon>Neobatrachia</taxon>
        <taxon>Ranoidea</taxon>
        <taxon>Ranidae</taxon>
        <taxon>Aquarana</taxon>
    </lineage>
</organism>
<name>THB_AQUCT</name>